<evidence type="ECO:0000250" key="1"/>
<evidence type="ECO:0000256" key="2">
    <source>
        <dbReference type="SAM" id="MobiDB-lite"/>
    </source>
</evidence>
<evidence type="ECO:0000305" key="3"/>
<comment type="function">
    <text evidence="1">Forms a fork protection complex (FPC) with tof1 and which is required for chromosome segregation during meiosis and DNA damage repair. FPC coordinates leading and lagging strand synthesis and moves with the replication fork. FPC stabilizes replication forks in a configuration that is recognized by replication checkpoint sensors (By similarity).</text>
</comment>
<comment type="subunit">
    <text evidence="1">Component of the fork protection complex (FPC) consisting of tof1 and csm3.</text>
</comment>
<comment type="subcellular location">
    <subcellularLocation>
        <location evidence="1">Nucleus</location>
    </subcellularLocation>
</comment>
<comment type="similarity">
    <text evidence="3">Belongs to the CSM3 family.</text>
</comment>
<comment type="sequence caution" evidence="3">
    <conflict type="erroneous initiation">
        <sequence resource="EMBL-CDS" id="EAU37730"/>
    </conflict>
</comment>
<proteinExistence type="inferred from homology"/>
<organism>
    <name type="scientific">Aspergillus terreus (strain NIH 2624 / FGSC A1156)</name>
    <dbReference type="NCBI Taxonomy" id="341663"/>
    <lineage>
        <taxon>Eukaryota</taxon>
        <taxon>Fungi</taxon>
        <taxon>Dikarya</taxon>
        <taxon>Ascomycota</taxon>
        <taxon>Pezizomycotina</taxon>
        <taxon>Eurotiomycetes</taxon>
        <taxon>Eurotiomycetidae</taxon>
        <taxon>Eurotiales</taxon>
        <taxon>Aspergillaceae</taxon>
        <taxon>Aspergillus</taxon>
        <taxon>Aspergillus subgen. Circumdati</taxon>
    </lineage>
</organism>
<reference key="1">
    <citation type="submission" date="2005-09" db="EMBL/GenBank/DDBJ databases">
        <title>Annotation of the Aspergillus terreus NIH2624 genome.</title>
        <authorList>
            <person name="Birren B.W."/>
            <person name="Lander E.S."/>
            <person name="Galagan J.E."/>
            <person name="Nusbaum C."/>
            <person name="Devon K."/>
            <person name="Henn M."/>
            <person name="Ma L.-J."/>
            <person name="Jaffe D.B."/>
            <person name="Butler J."/>
            <person name="Alvarez P."/>
            <person name="Gnerre S."/>
            <person name="Grabherr M."/>
            <person name="Kleber M."/>
            <person name="Mauceli E.W."/>
            <person name="Brockman W."/>
            <person name="Rounsley S."/>
            <person name="Young S.K."/>
            <person name="LaButti K."/>
            <person name="Pushparaj V."/>
            <person name="DeCaprio D."/>
            <person name="Crawford M."/>
            <person name="Koehrsen M."/>
            <person name="Engels R."/>
            <person name="Montgomery P."/>
            <person name="Pearson M."/>
            <person name="Howarth C."/>
            <person name="Larson L."/>
            <person name="Luoma S."/>
            <person name="White J."/>
            <person name="Alvarado L."/>
            <person name="Kodira C.D."/>
            <person name="Zeng Q."/>
            <person name="Oleary S."/>
            <person name="Yandava C."/>
            <person name="Denning D.W."/>
            <person name="Nierman W.C."/>
            <person name="Milne T."/>
            <person name="Madden K."/>
        </authorList>
    </citation>
    <scope>NUCLEOTIDE SEQUENCE [LARGE SCALE GENOMIC DNA]</scope>
    <source>
        <strain>NIH 2624 / FGSC A1156</strain>
    </source>
</reference>
<feature type="chain" id="PRO_0000301713" description="Chromosome segregation in meiosis protein 3">
    <location>
        <begin position="1"/>
        <end position="302"/>
    </location>
</feature>
<feature type="region of interest" description="Disordered" evidence="2">
    <location>
        <begin position="1"/>
        <end position="20"/>
    </location>
</feature>
<feature type="region of interest" description="Disordered" evidence="2">
    <location>
        <begin position="34"/>
        <end position="53"/>
    </location>
</feature>
<feature type="region of interest" description="Disordered" evidence="2">
    <location>
        <begin position="146"/>
        <end position="215"/>
    </location>
</feature>
<feature type="region of interest" description="Disordered" evidence="2">
    <location>
        <begin position="231"/>
        <end position="274"/>
    </location>
</feature>
<feature type="compositionally biased region" description="Polar residues" evidence="2">
    <location>
        <begin position="34"/>
        <end position="48"/>
    </location>
</feature>
<feature type="compositionally biased region" description="Basic and acidic residues" evidence="2">
    <location>
        <begin position="146"/>
        <end position="158"/>
    </location>
</feature>
<feature type="compositionally biased region" description="Polar residues" evidence="2">
    <location>
        <begin position="175"/>
        <end position="194"/>
    </location>
</feature>
<feature type="compositionally biased region" description="Basic and acidic residues" evidence="2">
    <location>
        <begin position="231"/>
        <end position="242"/>
    </location>
</feature>
<accession>Q0CU66</accession>
<keyword id="KW-0131">Cell cycle</keyword>
<keyword id="KW-0227">DNA damage</keyword>
<keyword id="KW-0234">DNA repair</keyword>
<keyword id="KW-0236">DNA replication inhibitor</keyword>
<keyword id="KW-0469">Meiosis</keyword>
<keyword id="KW-0539">Nucleus</keyword>
<keyword id="KW-1185">Reference proteome</keyword>
<gene>
    <name type="primary">csm3</name>
    <name type="ORF">ATEG_02768</name>
</gene>
<protein>
    <recommendedName>
        <fullName>Chromosome segregation in meiosis protein 3</fullName>
    </recommendedName>
</protein>
<dbReference type="EMBL" id="CH476596">
    <property type="protein sequence ID" value="EAU37730.1"/>
    <property type="status" value="ALT_INIT"/>
    <property type="molecule type" value="Genomic_DNA"/>
</dbReference>
<dbReference type="RefSeq" id="XP_001211946.1">
    <property type="nucleotide sequence ID" value="XM_001211946.1"/>
</dbReference>
<dbReference type="SMR" id="Q0CU66"/>
<dbReference type="STRING" id="341663.Q0CU66"/>
<dbReference type="EnsemblFungi" id="EAU37730">
    <property type="protein sequence ID" value="EAU37730"/>
    <property type="gene ID" value="ATEG_02768"/>
</dbReference>
<dbReference type="GeneID" id="4317009"/>
<dbReference type="eggNOG" id="KOG3004">
    <property type="taxonomic scope" value="Eukaryota"/>
</dbReference>
<dbReference type="OrthoDB" id="437078at2759"/>
<dbReference type="Proteomes" id="UP000007963">
    <property type="component" value="Unassembled WGS sequence"/>
</dbReference>
<dbReference type="GO" id="GO:0031298">
    <property type="term" value="C:replication fork protection complex"/>
    <property type="evidence" value="ECO:0007669"/>
    <property type="project" value="TreeGrafter"/>
</dbReference>
<dbReference type="GO" id="GO:0003677">
    <property type="term" value="F:DNA binding"/>
    <property type="evidence" value="ECO:0007669"/>
    <property type="project" value="TreeGrafter"/>
</dbReference>
<dbReference type="GO" id="GO:0006281">
    <property type="term" value="P:DNA repair"/>
    <property type="evidence" value="ECO:0007669"/>
    <property type="project" value="UniProtKB-KW"/>
</dbReference>
<dbReference type="GO" id="GO:0000076">
    <property type="term" value="P:DNA replication checkpoint signaling"/>
    <property type="evidence" value="ECO:0007669"/>
    <property type="project" value="InterPro"/>
</dbReference>
<dbReference type="GO" id="GO:0051321">
    <property type="term" value="P:meiotic cell cycle"/>
    <property type="evidence" value="ECO:0007669"/>
    <property type="project" value="UniProtKB-KW"/>
</dbReference>
<dbReference type="GO" id="GO:0043111">
    <property type="term" value="P:replication fork arrest"/>
    <property type="evidence" value="ECO:0007669"/>
    <property type="project" value="TreeGrafter"/>
</dbReference>
<dbReference type="GO" id="GO:0031297">
    <property type="term" value="P:replication fork processing"/>
    <property type="evidence" value="ECO:0007669"/>
    <property type="project" value="InterPro"/>
</dbReference>
<dbReference type="InterPro" id="IPR012923">
    <property type="entry name" value="Csm3"/>
</dbReference>
<dbReference type="InterPro" id="IPR040038">
    <property type="entry name" value="TIPIN/Csm3/Swi3"/>
</dbReference>
<dbReference type="PANTHER" id="PTHR13220">
    <property type="entry name" value="TIMELESS INTERACTING-RELATED"/>
    <property type="match status" value="1"/>
</dbReference>
<dbReference type="PANTHER" id="PTHR13220:SF11">
    <property type="entry name" value="TIMELESS-INTERACTING PROTEIN"/>
    <property type="match status" value="1"/>
</dbReference>
<dbReference type="Pfam" id="PF07962">
    <property type="entry name" value="Swi3"/>
    <property type="match status" value="1"/>
</dbReference>
<sequence>MDKENAADAQPATGQTHNDLFDYDVDLDAILGESSTRSNINAPQTSESRGLGLGLDDEVKVTRKRQPIAKLDEGRLLSQAGIPKLRRSAKQKLKFKGKGHEFSDAARLLNFYQLWLDDLFPRAKFTDGLAMIEKLGHSKRIQTMRREWIDQEKPRQRDDDDEPLQEAEGSHHNETSNAADQPSDRQSNSRQSPHPNDDSNDLFMSDEGNPQYVVDRPEAPEEDDLEALLREQEDEVVDKPDGPEEDDLDALLREQADVAVPQQKTSTAPSMDEDRLRVPVDHLYDCDVTHIRNVIVPSNMME</sequence>
<name>CSM3_ASPTN</name>